<organism>
    <name type="scientific">Streptococcus thermophilus (strain CNRZ 1066)</name>
    <dbReference type="NCBI Taxonomy" id="299768"/>
    <lineage>
        <taxon>Bacteria</taxon>
        <taxon>Bacillati</taxon>
        <taxon>Bacillota</taxon>
        <taxon>Bacilli</taxon>
        <taxon>Lactobacillales</taxon>
        <taxon>Streptococcaceae</taxon>
        <taxon>Streptococcus</taxon>
    </lineage>
</organism>
<accession>Q5M154</accession>
<protein>
    <recommendedName>
        <fullName evidence="1">4-hydroxy-tetrahydrodipicolinate reductase</fullName>
        <shortName evidence="1">HTPA reductase</shortName>
        <ecNumber evidence="1">1.17.1.8</ecNumber>
    </recommendedName>
</protein>
<reference key="1">
    <citation type="journal article" date="2004" name="Nat. Biotechnol.">
        <title>Complete sequence and comparative genome analysis of the dairy bacterium Streptococcus thermophilus.</title>
        <authorList>
            <person name="Bolotin A."/>
            <person name="Quinquis B."/>
            <person name="Renault P."/>
            <person name="Sorokin A."/>
            <person name="Ehrlich S.D."/>
            <person name="Kulakauskas S."/>
            <person name="Lapidus A."/>
            <person name="Goltsman E."/>
            <person name="Mazur M."/>
            <person name="Pusch G.D."/>
            <person name="Fonstein M."/>
            <person name="Overbeek R."/>
            <person name="Kyprides N."/>
            <person name="Purnelle B."/>
            <person name="Prozzi D."/>
            <person name="Ngui K."/>
            <person name="Masuy D."/>
            <person name="Hancy F."/>
            <person name="Burteau S."/>
            <person name="Boutry M."/>
            <person name="Delcour J."/>
            <person name="Goffeau A."/>
            <person name="Hols P."/>
        </authorList>
    </citation>
    <scope>NUCLEOTIDE SEQUENCE [LARGE SCALE GENOMIC DNA]</scope>
    <source>
        <strain>CNRZ 1066</strain>
    </source>
</reference>
<dbReference type="EC" id="1.17.1.8" evidence="1"/>
<dbReference type="EMBL" id="CP000024">
    <property type="protein sequence ID" value="AAV62025.1"/>
    <property type="molecule type" value="Genomic_DNA"/>
</dbReference>
<dbReference type="RefSeq" id="WP_004197279.1">
    <property type="nucleotide sequence ID" value="NC_006449.1"/>
</dbReference>
<dbReference type="SMR" id="Q5M154"/>
<dbReference type="GeneID" id="66898339"/>
<dbReference type="KEGG" id="stc:str0424"/>
<dbReference type="HOGENOM" id="CLU_047479_0_1_9"/>
<dbReference type="UniPathway" id="UPA00034">
    <property type="reaction ID" value="UER00018"/>
</dbReference>
<dbReference type="GO" id="GO:0005829">
    <property type="term" value="C:cytosol"/>
    <property type="evidence" value="ECO:0007669"/>
    <property type="project" value="TreeGrafter"/>
</dbReference>
<dbReference type="GO" id="GO:0008839">
    <property type="term" value="F:4-hydroxy-tetrahydrodipicolinate reductase"/>
    <property type="evidence" value="ECO:0007669"/>
    <property type="project" value="UniProtKB-EC"/>
</dbReference>
<dbReference type="GO" id="GO:0051287">
    <property type="term" value="F:NAD binding"/>
    <property type="evidence" value="ECO:0007669"/>
    <property type="project" value="UniProtKB-UniRule"/>
</dbReference>
<dbReference type="GO" id="GO:0050661">
    <property type="term" value="F:NADP binding"/>
    <property type="evidence" value="ECO:0007669"/>
    <property type="project" value="UniProtKB-UniRule"/>
</dbReference>
<dbReference type="GO" id="GO:0016726">
    <property type="term" value="F:oxidoreductase activity, acting on CH or CH2 groups, NAD or NADP as acceptor"/>
    <property type="evidence" value="ECO:0007669"/>
    <property type="project" value="UniProtKB-UniRule"/>
</dbReference>
<dbReference type="GO" id="GO:0019877">
    <property type="term" value="P:diaminopimelate biosynthetic process"/>
    <property type="evidence" value="ECO:0007669"/>
    <property type="project" value="UniProtKB-UniRule"/>
</dbReference>
<dbReference type="GO" id="GO:0009089">
    <property type="term" value="P:lysine biosynthetic process via diaminopimelate"/>
    <property type="evidence" value="ECO:0007669"/>
    <property type="project" value="UniProtKB-UniRule"/>
</dbReference>
<dbReference type="CDD" id="cd02274">
    <property type="entry name" value="DHDPR_N"/>
    <property type="match status" value="1"/>
</dbReference>
<dbReference type="FunFam" id="3.30.360.10:FF:000009">
    <property type="entry name" value="4-hydroxy-tetrahydrodipicolinate reductase"/>
    <property type="match status" value="1"/>
</dbReference>
<dbReference type="Gene3D" id="3.30.360.10">
    <property type="entry name" value="Dihydrodipicolinate Reductase, domain 2"/>
    <property type="match status" value="1"/>
</dbReference>
<dbReference type="Gene3D" id="3.40.50.720">
    <property type="entry name" value="NAD(P)-binding Rossmann-like Domain"/>
    <property type="match status" value="1"/>
</dbReference>
<dbReference type="HAMAP" id="MF_00102">
    <property type="entry name" value="DapB"/>
    <property type="match status" value="1"/>
</dbReference>
<dbReference type="InterPro" id="IPR022663">
    <property type="entry name" value="DapB_C"/>
</dbReference>
<dbReference type="InterPro" id="IPR000846">
    <property type="entry name" value="DapB_N"/>
</dbReference>
<dbReference type="InterPro" id="IPR022664">
    <property type="entry name" value="DapB_N_CS"/>
</dbReference>
<dbReference type="InterPro" id="IPR023940">
    <property type="entry name" value="DHDPR_bac"/>
</dbReference>
<dbReference type="InterPro" id="IPR036291">
    <property type="entry name" value="NAD(P)-bd_dom_sf"/>
</dbReference>
<dbReference type="NCBIfam" id="TIGR00036">
    <property type="entry name" value="dapB"/>
    <property type="match status" value="1"/>
</dbReference>
<dbReference type="PANTHER" id="PTHR20836:SF0">
    <property type="entry name" value="4-HYDROXY-TETRAHYDRODIPICOLINATE REDUCTASE 1, CHLOROPLASTIC-RELATED"/>
    <property type="match status" value="1"/>
</dbReference>
<dbReference type="PANTHER" id="PTHR20836">
    <property type="entry name" value="DIHYDRODIPICOLINATE REDUCTASE"/>
    <property type="match status" value="1"/>
</dbReference>
<dbReference type="Pfam" id="PF05173">
    <property type="entry name" value="DapB_C"/>
    <property type="match status" value="1"/>
</dbReference>
<dbReference type="Pfam" id="PF01113">
    <property type="entry name" value="DapB_N"/>
    <property type="match status" value="1"/>
</dbReference>
<dbReference type="PIRSF" id="PIRSF000161">
    <property type="entry name" value="DHPR"/>
    <property type="match status" value="1"/>
</dbReference>
<dbReference type="SUPFAM" id="SSF55347">
    <property type="entry name" value="Glyceraldehyde-3-phosphate dehydrogenase-like, C-terminal domain"/>
    <property type="match status" value="1"/>
</dbReference>
<dbReference type="SUPFAM" id="SSF51735">
    <property type="entry name" value="NAD(P)-binding Rossmann-fold domains"/>
    <property type="match status" value="1"/>
</dbReference>
<dbReference type="PROSITE" id="PS01298">
    <property type="entry name" value="DAPB"/>
    <property type="match status" value="1"/>
</dbReference>
<proteinExistence type="inferred from homology"/>
<comment type="function">
    <text evidence="1">Catalyzes the conversion of 4-hydroxy-tetrahydrodipicolinate (HTPA) to tetrahydrodipicolinate.</text>
</comment>
<comment type="catalytic activity">
    <reaction evidence="1">
        <text>(S)-2,3,4,5-tetrahydrodipicolinate + NAD(+) + H2O = (2S,4S)-4-hydroxy-2,3,4,5-tetrahydrodipicolinate + NADH + H(+)</text>
        <dbReference type="Rhea" id="RHEA:35323"/>
        <dbReference type="ChEBI" id="CHEBI:15377"/>
        <dbReference type="ChEBI" id="CHEBI:15378"/>
        <dbReference type="ChEBI" id="CHEBI:16845"/>
        <dbReference type="ChEBI" id="CHEBI:57540"/>
        <dbReference type="ChEBI" id="CHEBI:57945"/>
        <dbReference type="ChEBI" id="CHEBI:67139"/>
        <dbReference type="EC" id="1.17.1.8"/>
    </reaction>
</comment>
<comment type="catalytic activity">
    <reaction evidence="1">
        <text>(S)-2,3,4,5-tetrahydrodipicolinate + NADP(+) + H2O = (2S,4S)-4-hydroxy-2,3,4,5-tetrahydrodipicolinate + NADPH + H(+)</text>
        <dbReference type="Rhea" id="RHEA:35331"/>
        <dbReference type="ChEBI" id="CHEBI:15377"/>
        <dbReference type="ChEBI" id="CHEBI:15378"/>
        <dbReference type="ChEBI" id="CHEBI:16845"/>
        <dbReference type="ChEBI" id="CHEBI:57783"/>
        <dbReference type="ChEBI" id="CHEBI:58349"/>
        <dbReference type="ChEBI" id="CHEBI:67139"/>
        <dbReference type="EC" id="1.17.1.8"/>
    </reaction>
</comment>
<comment type="pathway">
    <text evidence="1">Amino-acid biosynthesis; L-lysine biosynthesis via DAP pathway; (S)-tetrahydrodipicolinate from L-aspartate: step 4/4.</text>
</comment>
<comment type="subcellular location">
    <subcellularLocation>
        <location evidence="1">Cytoplasm</location>
    </subcellularLocation>
</comment>
<comment type="similarity">
    <text evidence="1">Belongs to the DapB family.</text>
</comment>
<comment type="caution">
    <text evidence="2">Was originally thought to be a dihydrodipicolinate reductase (DHDPR), catalyzing the conversion of dihydrodipicolinate to tetrahydrodipicolinate. However, it was shown in E.coli that the substrate of the enzymatic reaction is not dihydrodipicolinate (DHDP) but in fact (2S,4S)-4-hydroxy-2,3,4,5-tetrahydrodipicolinic acid (HTPA), the product released by the DapA-catalyzed reaction.</text>
</comment>
<gene>
    <name evidence="1" type="primary">dapB</name>
    <name type="ordered locus">str0424</name>
</gene>
<sequence>MSIKVIVAGFKGRMGSTAVEMVKGDDELTLAALLDPFAAEKEVDGVPVFTDKADLVGFDADVWVDFTIPAVAYENTRFALENGFAPVVGTTGFTEAQIQKLTDLSKDKSIGGLIAPNFAIGAILLMKFAAEASKYFPDLEIIELHHDKKKDAPSGTAVKTAELIREVRESKRQGAEDEMETLAGARGAEFDGFRIHSVRLPGLVAHQEVIFGAQGEGLTLRHDSYDRISFMSGVNLGIKEVVKRDQLVYGLEHLL</sequence>
<keyword id="KW-0028">Amino-acid biosynthesis</keyword>
<keyword id="KW-0963">Cytoplasm</keyword>
<keyword id="KW-0220">Diaminopimelate biosynthesis</keyword>
<keyword id="KW-0457">Lysine biosynthesis</keyword>
<keyword id="KW-0520">NAD</keyword>
<keyword id="KW-0521">NADP</keyword>
<keyword id="KW-0560">Oxidoreductase</keyword>
<evidence type="ECO:0000255" key="1">
    <source>
        <dbReference type="HAMAP-Rule" id="MF_00102"/>
    </source>
</evidence>
<evidence type="ECO:0000305" key="2"/>
<name>DAPB_STRT1</name>
<feature type="chain" id="PRO_0000228394" description="4-hydroxy-tetrahydrodipicolinate reductase">
    <location>
        <begin position="1"/>
        <end position="255"/>
    </location>
</feature>
<feature type="active site" description="Proton donor/acceptor" evidence="1">
    <location>
        <position position="145"/>
    </location>
</feature>
<feature type="active site" description="Proton donor" evidence="1">
    <location>
        <position position="149"/>
    </location>
</feature>
<feature type="binding site" evidence="1">
    <location>
        <begin position="9"/>
        <end position="14"/>
    </location>
    <ligand>
        <name>NAD(+)</name>
        <dbReference type="ChEBI" id="CHEBI:57540"/>
    </ligand>
</feature>
<feature type="binding site" evidence="1">
    <location>
        <begin position="89"/>
        <end position="91"/>
    </location>
    <ligand>
        <name>NAD(+)</name>
        <dbReference type="ChEBI" id="CHEBI:57540"/>
    </ligand>
</feature>
<feature type="binding site" evidence="1">
    <location>
        <begin position="115"/>
        <end position="118"/>
    </location>
    <ligand>
        <name>NAD(+)</name>
        <dbReference type="ChEBI" id="CHEBI:57540"/>
    </ligand>
</feature>
<feature type="binding site" evidence="1">
    <location>
        <position position="146"/>
    </location>
    <ligand>
        <name>(S)-2,3,4,5-tetrahydrodipicolinate</name>
        <dbReference type="ChEBI" id="CHEBI:16845"/>
    </ligand>
</feature>
<feature type="binding site" evidence="1">
    <location>
        <begin position="155"/>
        <end position="156"/>
    </location>
    <ligand>
        <name>(S)-2,3,4,5-tetrahydrodipicolinate</name>
        <dbReference type="ChEBI" id="CHEBI:16845"/>
    </ligand>
</feature>